<dbReference type="PIR" id="S10652">
    <property type="entry name" value="QQQYAW"/>
</dbReference>
<dbReference type="InterPro" id="IPR021683">
    <property type="entry name" value="DUF3267"/>
</dbReference>
<dbReference type="Pfam" id="PF11667">
    <property type="entry name" value="DUF3267"/>
    <property type="match status" value="1"/>
</dbReference>
<protein>
    <recommendedName>
        <fullName>Uncharacterized 24.7 kDa protein in gap 5'region</fullName>
    </recommendedName>
    <alternativeName>
        <fullName>ORF A</fullName>
    </alternativeName>
</protein>
<sequence>MKDSMFLYEFDLCRYSKDLTALSLGLLIGASLTVRWVSLSMSSSRDLLHYLVLPLILVVILHEGLHALTAKLSGAKTSLGVLTKYGIILAVYVGINTPLPVKKIRYITIAPIIISIVAFFFSWVTYSPFWAILYIFNTTGIVGDLIVFLVLSKMPSDAIVVDEGTIMKSNAEFPEPYPSWFSKLIIGLAVLVFLYILTNIRIEFEVVGTLPNQTMPVNSHFE</sequence>
<feature type="chain" id="PRO_0000066378" description="Uncharacterized 24.7 kDa protein in gap 5'region">
    <location>
        <begin position="1"/>
        <end position="222"/>
    </location>
</feature>
<name>YORA_PYRWO</name>
<reference key="1">
    <citation type="journal article" date="1990" name="J. Bacteriol.">
        <title>Glyceraldehyde-3-phosphate dehydrogenase from the hyperthermophilic archaebacterium Pyrococcus woesei: characterization of the enzyme, cloning and sequencing of the gene, and expression in Escherichia coli.</title>
        <authorList>
            <person name="Zwickl P."/>
            <person name="Fabry S."/>
            <person name="Bogedain C."/>
            <person name="Haas A."/>
            <person name="Hensel R."/>
        </authorList>
    </citation>
    <scope>NUCLEOTIDE SEQUENCE [GENOMIC DNA]</scope>
    <source>
        <strain>ATCC 49860 / DSM 3773 / JCM 8421 / Vul4</strain>
    </source>
</reference>
<organism>
    <name type="scientific">Pyrococcus woesei</name>
    <dbReference type="NCBI Taxonomy" id="2262"/>
    <lineage>
        <taxon>Archaea</taxon>
        <taxon>Methanobacteriati</taxon>
        <taxon>Methanobacteriota</taxon>
        <taxon>Thermococci</taxon>
        <taxon>Thermococcales</taxon>
        <taxon>Thermococcaceae</taxon>
        <taxon>Pyrococcus</taxon>
    </lineage>
</organism>
<accession>P20296</accession>
<proteinExistence type="predicted"/>